<keyword id="KW-0150">Chloroplast</keyword>
<keyword id="KW-0406">Ion transport</keyword>
<keyword id="KW-0472">Membrane</keyword>
<keyword id="KW-0934">Plastid</keyword>
<keyword id="KW-1002">Plastid outer membrane</keyword>
<keyword id="KW-0626">Porin</keyword>
<keyword id="KW-1185">Reference proteome</keyword>
<keyword id="KW-0812">Transmembrane</keyword>
<keyword id="KW-1134">Transmembrane beta strand</keyword>
<keyword id="KW-0813">Transport</keyword>
<reference key="1">
    <citation type="journal article" date="2005" name="PLoS Biol.">
        <title>The genomes of Oryza sativa: a history of duplications.</title>
        <authorList>
            <person name="Yu J."/>
            <person name="Wang J."/>
            <person name="Lin W."/>
            <person name="Li S."/>
            <person name="Li H."/>
            <person name="Zhou J."/>
            <person name="Ni P."/>
            <person name="Dong W."/>
            <person name="Hu S."/>
            <person name="Zeng C."/>
            <person name="Zhang J."/>
            <person name="Zhang Y."/>
            <person name="Li R."/>
            <person name="Xu Z."/>
            <person name="Li S."/>
            <person name="Li X."/>
            <person name="Zheng H."/>
            <person name="Cong L."/>
            <person name="Lin L."/>
            <person name="Yin J."/>
            <person name="Geng J."/>
            <person name="Li G."/>
            <person name="Shi J."/>
            <person name="Liu J."/>
            <person name="Lv H."/>
            <person name="Li J."/>
            <person name="Wang J."/>
            <person name="Deng Y."/>
            <person name="Ran L."/>
            <person name="Shi X."/>
            <person name="Wang X."/>
            <person name="Wu Q."/>
            <person name="Li C."/>
            <person name="Ren X."/>
            <person name="Wang J."/>
            <person name="Wang X."/>
            <person name="Li D."/>
            <person name="Liu D."/>
            <person name="Zhang X."/>
            <person name="Ji Z."/>
            <person name="Zhao W."/>
            <person name="Sun Y."/>
            <person name="Zhang Z."/>
            <person name="Bao J."/>
            <person name="Han Y."/>
            <person name="Dong L."/>
            <person name="Ji J."/>
            <person name="Chen P."/>
            <person name="Wu S."/>
            <person name="Liu J."/>
            <person name="Xiao Y."/>
            <person name="Bu D."/>
            <person name="Tan J."/>
            <person name="Yang L."/>
            <person name="Ye C."/>
            <person name="Zhang J."/>
            <person name="Xu J."/>
            <person name="Zhou Y."/>
            <person name="Yu Y."/>
            <person name="Zhang B."/>
            <person name="Zhuang S."/>
            <person name="Wei H."/>
            <person name="Liu B."/>
            <person name="Lei M."/>
            <person name="Yu H."/>
            <person name="Li Y."/>
            <person name="Xu H."/>
            <person name="Wei S."/>
            <person name="He X."/>
            <person name="Fang L."/>
            <person name="Zhang Z."/>
            <person name="Zhang Y."/>
            <person name="Huang X."/>
            <person name="Su Z."/>
            <person name="Tong W."/>
            <person name="Li J."/>
            <person name="Tong Z."/>
            <person name="Li S."/>
            <person name="Ye J."/>
            <person name="Wang L."/>
            <person name="Fang L."/>
            <person name="Lei T."/>
            <person name="Chen C.-S."/>
            <person name="Chen H.-C."/>
            <person name="Xu Z."/>
            <person name="Li H."/>
            <person name="Huang H."/>
            <person name="Zhang F."/>
            <person name="Xu H."/>
            <person name="Li N."/>
            <person name="Zhao C."/>
            <person name="Li S."/>
            <person name="Dong L."/>
            <person name="Huang Y."/>
            <person name="Li L."/>
            <person name="Xi Y."/>
            <person name="Qi Q."/>
            <person name="Li W."/>
            <person name="Zhang B."/>
            <person name="Hu W."/>
            <person name="Zhang Y."/>
            <person name="Tian X."/>
            <person name="Jiao Y."/>
            <person name="Liang X."/>
            <person name="Jin J."/>
            <person name="Gao L."/>
            <person name="Zheng W."/>
            <person name="Hao B."/>
            <person name="Liu S.-M."/>
            <person name="Wang W."/>
            <person name="Yuan L."/>
            <person name="Cao M."/>
            <person name="McDermott J."/>
            <person name="Samudrala R."/>
            <person name="Wang J."/>
            <person name="Wong G.K.-S."/>
            <person name="Yang H."/>
        </authorList>
    </citation>
    <scope>NUCLEOTIDE SEQUENCE [LARGE SCALE GENOMIC DNA]</scope>
    <source>
        <strain>cv. 93-11</strain>
    </source>
</reference>
<evidence type="ECO:0000250" key="1"/>
<evidence type="ECO:0000255" key="2"/>
<evidence type="ECO:0000256" key="3">
    <source>
        <dbReference type="SAM" id="MobiDB-lite"/>
    </source>
</evidence>
<evidence type="ECO:0000305" key="4"/>
<sequence>METSLRLRGGGSRPQSKSQEGLRIHAKEKLPIASNALLQAHGEIHAATGAPTYLALLFRNFYPRLSANLGLGLAIHFRNNQPLPLAWDNFSYTLRASKAIIPFPSNALLGINLKGRLLADKYFNPTTRTAAVELAWTILDLKRGQDVRLKLGYQLLHKMPYFQLRENNWTFNAYMDGKWDVRFDL</sequence>
<comment type="function">
    <text evidence="1">Voltage-dependent rectifying anion channel that facilitates the translocation between chloroplast and cytoplasm of phosphorylated carbohydrates such as triosephosphate, 3-phosphoglycerate and inorganic phosphate (Pi) depending of ATP to triosephosphate ratio in the plastidial intermembrane space; in high triosephosphate/ATP conditions (e.g. photosynthesis), export of triosphosphate from chloroplast (outward rectifying channels), but in high ATP/triosephosphate conditions (e.g. dark phase), import of phosphosolutes (inward rectifying channels) (By similarity).</text>
</comment>
<comment type="subcellular location">
    <subcellularLocation>
        <location evidence="1">Plastid</location>
        <location evidence="1">Etioplast membrane</location>
        <topology evidence="1">Multi-pass membrane protein</topology>
    </subcellularLocation>
    <subcellularLocation>
        <location evidence="1">Plastid</location>
        <location evidence="1">Chloroplast outer membrane</location>
        <topology evidence="1">Multi-pass membrane protein</topology>
    </subcellularLocation>
    <text evidence="1">Present in non-green root plastids.</text>
</comment>
<comment type="similarity">
    <text evidence="4">Belongs to the plastid outer envelope porin OEP21 (TC 1.B.29) family.</text>
</comment>
<gene>
    <name type="primary">OEP21</name>
    <name type="ORF">OsI_09575</name>
</gene>
<feature type="chain" id="PRO_0000415550" description="Outer envelope pore protein 21, chloroplastic">
    <location>
        <begin position="1"/>
        <end position="185"/>
    </location>
</feature>
<feature type="topological domain" description="Cytoplasmic" evidence="2">
    <location>
        <begin position="1"/>
        <end position="29"/>
    </location>
</feature>
<feature type="transmembrane region" description="Beta stranded; Name=1" evidence="2">
    <location>
        <begin position="30"/>
        <end position="39"/>
    </location>
</feature>
<feature type="topological domain" description="Chloroplast intermembrane" evidence="2">
    <location>
        <begin position="40"/>
        <end position="63"/>
    </location>
</feature>
<feature type="transmembrane region" description="Beta stranded; Name=2" evidence="2">
    <location>
        <begin position="64"/>
        <end position="73"/>
    </location>
</feature>
<feature type="topological domain" description="Cytoplasmic" evidence="2">
    <location>
        <begin position="74"/>
        <end position="88"/>
    </location>
</feature>
<feature type="transmembrane region" description="Beta stranded; Name=3" evidence="2">
    <location>
        <begin position="89"/>
        <end position="98"/>
    </location>
</feature>
<feature type="topological domain" description="Chloroplast intermembrane" evidence="2">
    <location>
        <begin position="99"/>
        <end position="105"/>
    </location>
</feature>
<feature type="transmembrane region" description="Beta stranded; Name=4" evidence="2">
    <location>
        <begin position="106"/>
        <end position="115"/>
    </location>
</feature>
<feature type="topological domain" description="Cytoplasmic" evidence="2">
    <location>
        <begin position="116"/>
        <end position="128"/>
    </location>
</feature>
<feature type="transmembrane region" description="Beta stranded; Name=5" evidence="2">
    <location>
        <begin position="129"/>
        <end position="138"/>
    </location>
</feature>
<feature type="topological domain" description="Chloroplast intermembrane" evidence="2">
    <location>
        <begin position="139"/>
        <end position="145"/>
    </location>
</feature>
<feature type="transmembrane region" description="Beta stranded; Name=6" evidence="2">
    <location>
        <begin position="146"/>
        <end position="155"/>
    </location>
</feature>
<feature type="topological domain" description="Cytoplasmic" evidence="2">
    <location>
        <begin position="156"/>
        <end position="160"/>
    </location>
</feature>
<feature type="transmembrane region" description="Beta stranded; Name=7" evidence="2">
    <location>
        <begin position="161"/>
        <end position="170"/>
    </location>
</feature>
<feature type="topological domain" description="Chloroplast intermembrane" evidence="2">
    <location>
        <begin position="171"/>
        <end position="176"/>
    </location>
</feature>
<feature type="transmembrane region" description="Beta stranded; Name=8" evidence="2">
    <location>
        <begin position="177"/>
        <end position="185"/>
    </location>
</feature>
<feature type="region of interest" description="Disordered" evidence="3">
    <location>
        <begin position="1"/>
        <end position="22"/>
    </location>
</feature>
<accession>B8AFI8</accession>
<protein>
    <recommendedName>
        <fullName>Outer envelope pore protein 21, chloroplastic</fullName>
    </recommendedName>
    <alternativeName>
        <fullName>Chloroplastic outer envelope pore protein of 21 kDa</fullName>
    </alternativeName>
</protein>
<name>OEP21_ORYSI</name>
<organism>
    <name type="scientific">Oryza sativa subsp. indica</name>
    <name type="common">Rice</name>
    <dbReference type="NCBI Taxonomy" id="39946"/>
    <lineage>
        <taxon>Eukaryota</taxon>
        <taxon>Viridiplantae</taxon>
        <taxon>Streptophyta</taxon>
        <taxon>Embryophyta</taxon>
        <taxon>Tracheophyta</taxon>
        <taxon>Spermatophyta</taxon>
        <taxon>Magnoliopsida</taxon>
        <taxon>Liliopsida</taxon>
        <taxon>Poales</taxon>
        <taxon>Poaceae</taxon>
        <taxon>BOP clade</taxon>
        <taxon>Oryzoideae</taxon>
        <taxon>Oryzeae</taxon>
        <taxon>Oryzinae</taxon>
        <taxon>Oryza</taxon>
        <taxon>Oryza sativa</taxon>
    </lineage>
</organism>
<dbReference type="EMBL" id="CM000127">
    <property type="protein sequence ID" value="EEC74307.1"/>
    <property type="molecule type" value="Genomic_DNA"/>
</dbReference>
<dbReference type="SMR" id="B8AFI8"/>
<dbReference type="STRING" id="39946.B8AFI8"/>
<dbReference type="EnsemblPlants" id="BGIOSGA005297-TA">
    <property type="protein sequence ID" value="BGIOSGA005297-PA"/>
    <property type="gene ID" value="BGIOSGA005297"/>
</dbReference>
<dbReference type="EnsemblPlants" id="OsGoSa_02g0039500.01">
    <property type="protein sequence ID" value="OsGoSa_02g0039500.01"/>
    <property type="gene ID" value="OsGoSa_02g0039500"/>
</dbReference>
<dbReference type="EnsemblPlants" id="OsGoSa_02g0039500.02">
    <property type="protein sequence ID" value="OsGoSa_02g0039500.02"/>
    <property type="gene ID" value="OsGoSa_02g0039500"/>
</dbReference>
<dbReference type="EnsemblPlants" id="OsIR64_02g0039150.01">
    <property type="protein sequence ID" value="OsIR64_02g0039150.01"/>
    <property type="gene ID" value="OsIR64_02g0039150"/>
</dbReference>
<dbReference type="EnsemblPlants" id="OsIR64_02g0039150.02">
    <property type="protein sequence ID" value="OsIR64_02g0039150.02"/>
    <property type="gene ID" value="OsIR64_02g0039150"/>
</dbReference>
<dbReference type="EnsemblPlants" id="OsKYG_02g0039340.01">
    <property type="protein sequence ID" value="OsKYG_02g0039340.01"/>
    <property type="gene ID" value="OsKYG_02g0039340"/>
</dbReference>
<dbReference type="EnsemblPlants" id="OsKYG_02g0039340.02">
    <property type="protein sequence ID" value="OsKYG_02g0039340.02"/>
    <property type="gene ID" value="OsKYG_02g0039340"/>
</dbReference>
<dbReference type="EnsemblPlants" id="OsLaMu_02g0039140.01">
    <property type="protein sequence ID" value="OsLaMu_02g0039140.01"/>
    <property type="gene ID" value="OsLaMu_02g0039140"/>
</dbReference>
<dbReference type="EnsemblPlants" id="OsLaMu_02g0039140.02">
    <property type="protein sequence ID" value="OsLaMu_02g0039140.02"/>
    <property type="gene ID" value="OsLaMu_02g0039140"/>
</dbReference>
<dbReference type="EnsemblPlants" id="OsLiXu_02g0039500.01">
    <property type="protein sequence ID" value="OsLiXu_02g0039500.01"/>
    <property type="gene ID" value="OsLiXu_02g0039500"/>
</dbReference>
<dbReference type="EnsemblPlants" id="OsLiXu_02g0039500.02">
    <property type="protein sequence ID" value="OsLiXu_02g0039500.02"/>
    <property type="gene ID" value="OsLiXu_02g0039500"/>
</dbReference>
<dbReference type="EnsemblPlants" id="OsMH63_02G039730_01">
    <property type="protein sequence ID" value="OsMH63_02G039730_01"/>
    <property type="gene ID" value="OsMH63_02G039730"/>
</dbReference>
<dbReference type="EnsemblPlants" id="OsMH63_02G039730_02">
    <property type="protein sequence ID" value="OsMH63_02G039730_02"/>
    <property type="gene ID" value="OsMH63_02G039730"/>
</dbReference>
<dbReference type="EnsemblPlants" id="OsPr106_02g0039450.01">
    <property type="protein sequence ID" value="OsPr106_02g0039450.01"/>
    <property type="gene ID" value="OsPr106_02g0039450"/>
</dbReference>
<dbReference type="EnsemblPlants" id="OsPr106_02g0039450.02">
    <property type="protein sequence ID" value="OsPr106_02g0039450.02"/>
    <property type="gene ID" value="OsPr106_02g0039450"/>
</dbReference>
<dbReference type="EnsemblPlants" id="OsZS97_02G039160_01">
    <property type="protein sequence ID" value="OsZS97_02G039160_01"/>
    <property type="gene ID" value="OsZS97_02G039160"/>
</dbReference>
<dbReference type="EnsemblPlants" id="OsZS97_02G039160_02">
    <property type="protein sequence ID" value="OsZS97_02G039160_02"/>
    <property type="gene ID" value="OsZS97_02G039160"/>
</dbReference>
<dbReference type="Gramene" id="BGIOSGA005297-TA">
    <property type="protein sequence ID" value="BGIOSGA005297-PA"/>
    <property type="gene ID" value="BGIOSGA005297"/>
</dbReference>
<dbReference type="Gramene" id="OsGoSa_02g0039500.01">
    <property type="protein sequence ID" value="OsGoSa_02g0039500.01"/>
    <property type="gene ID" value="OsGoSa_02g0039500"/>
</dbReference>
<dbReference type="Gramene" id="OsGoSa_02g0039500.02">
    <property type="protein sequence ID" value="OsGoSa_02g0039500.02"/>
    <property type="gene ID" value="OsGoSa_02g0039500"/>
</dbReference>
<dbReference type="Gramene" id="OsIR64_02g0039150.01">
    <property type="protein sequence ID" value="OsIR64_02g0039150.01"/>
    <property type="gene ID" value="OsIR64_02g0039150"/>
</dbReference>
<dbReference type="Gramene" id="OsIR64_02g0039150.02">
    <property type="protein sequence ID" value="OsIR64_02g0039150.02"/>
    <property type="gene ID" value="OsIR64_02g0039150"/>
</dbReference>
<dbReference type="Gramene" id="OsKYG_02g0039340.01">
    <property type="protein sequence ID" value="OsKYG_02g0039340.01"/>
    <property type="gene ID" value="OsKYG_02g0039340"/>
</dbReference>
<dbReference type="Gramene" id="OsKYG_02g0039340.02">
    <property type="protein sequence ID" value="OsKYG_02g0039340.02"/>
    <property type="gene ID" value="OsKYG_02g0039340"/>
</dbReference>
<dbReference type="Gramene" id="OsLaMu_02g0039140.01">
    <property type="protein sequence ID" value="OsLaMu_02g0039140.01"/>
    <property type="gene ID" value="OsLaMu_02g0039140"/>
</dbReference>
<dbReference type="Gramene" id="OsLaMu_02g0039140.02">
    <property type="protein sequence ID" value="OsLaMu_02g0039140.02"/>
    <property type="gene ID" value="OsLaMu_02g0039140"/>
</dbReference>
<dbReference type="Gramene" id="OsLiXu_02g0039500.01">
    <property type="protein sequence ID" value="OsLiXu_02g0039500.01"/>
    <property type="gene ID" value="OsLiXu_02g0039500"/>
</dbReference>
<dbReference type="Gramene" id="OsLiXu_02g0039500.02">
    <property type="protein sequence ID" value="OsLiXu_02g0039500.02"/>
    <property type="gene ID" value="OsLiXu_02g0039500"/>
</dbReference>
<dbReference type="Gramene" id="OsMH63_02G039730_01">
    <property type="protein sequence ID" value="OsMH63_02G039730_01"/>
    <property type="gene ID" value="OsMH63_02G039730"/>
</dbReference>
<dbReference type="Gramene" id="OsMH63_02G039730_02">
    <property type="protein sequence ID" value="OsMH63_02G039730_02"/>
    <property type="gene ID" value="OsMH63_02G039730"/>
</dbReference>
<dbReference type="Gramene" id="OsPr106_02g0039450.01">
    <property type="protein sequence ID" value="OsPr106_02g0039450.01"/>
    <property type="gene ID" value="OsPr106_02g0039450"/>
</dbReference>
<dbReference type="Gramene" id="OsPr106_02g0039450.02">
    <property type="protein sequence ID" value="OsPr106_02g0039450.02"/>
    <property type="gene ID" value="OsPr106_02g0039450"/>
</dbReference>
<dbReference type="Gramene" id="OsZS97_02G039160_01">
    <property type="protein sequence ID" value="OsZS97_02G039160_01"/>
    <property type="gene ID" value="OsZS97_02G039160"/>
</dbReference>
<dbReference type="Gramene" id="OsZS97_02G039160_02">
    <property type="protein sequence ID" value="OsZS97_02G039160_02"/>
    <property type="gene ID" value="OsZS97_02G039160"/>
</dbReference>
<dbReference type="HOGENOM" id="CLU_104399_0_0_1"/>
<dbReference type="OMA" id="NADYKGR"/>
<dbReference type="OrthoDB" id="503907at2759"/>
<dbReference type="Proteomes" id="UP000007015">
    <property type="component" value="Chromosome 2"/>
</dbReference>
<dbReference type="GO" id="GO:0009707">
    <property type="term" value="C:chloroplast outer membrane"/>
    <property type="evidence" value="ECO:0000250"/>
    <property type="project" value="UniProtKB"/>
</dbReference>
<dbReference type="GO" id="GO:0034426">
    <property type="term" value="C:etioplast membrane"/>
    <property type="evidence" value="ECO:0000250"/>
    <property type="project" value="UniProtKB"/>
</dbReference>
<dbReference type="GO" id="GO:0046930">
    <property type="term" value="C:pore complex"/>
    <property type="evidence" value="ECO:0007669"/>
    <property type="project" value="UniProtKB-KW"/>
</dbReference>
<dbReference type="GO" id="GO:0015288">
    <property type="term" value="F:porin activity"/>
    <property type="evidence" value="ECO:0000250"/>
    <property type="project" value="UniProtKB"/>
</dbReference>
<dbReference type="GO" id="GO:0008308">
    <property type="term" value="F:voltage-gated monoatomic anion channel activity"/>
    <property type="evidence" value="ECO:0000250"/>
    <property type="project" value="UniProtKB"/>
</dbReference>
<dbReference type="GO" id="GO:0044070">
    <property type="term" value="P:regulation of monoatomic anion transport"/>
    <property type="evidence" value="ECO:0000250"/>
    <property type="project" value="UniProtKB"/>
</dbReference>
<dbReference type="InterPro" id="IPR034575">
    <property type="entry name" value="OEP21"/>
</dbReference>
<dbReference type="PANTHER" id="PTHR35993">
    <property type="entry name" value="OUTER ENVELOPE PORE PROTEIN 21B, CHLOROPLASTIC"/>
    <property type="match status" value="1"/>
</dbReference>
<dbReference type="PANTHER" id="PTHR35993:SF1">
    <property type="entry name" value="OUTER ENVELOPE PORE PROTEIN 21B, CHLOROPLASTIC"/>
    <property type="match status" value="1"/>
</dbReference>
<proteinExistence type="inferred from homology"/>